<keyword id="KW-0119">Carbohydrate metabolism</keyword>
<keyword id="KW-0320">Glycogen biosynthesis</keyword>
<keyword id="KW-0321">Glycogen metabolism</keyword>
<keyword id="KW-0328">Glycosyltransferase</keyword>
<keyword id="KW-0808">Transferase</keyword>
<feature type="chain" id="PRO_0000260709" description="1,4-alpha-glucan branching enzyme GlgB">
    <location>
        <begin position="1"/>
        <end position="770"/>
    </location>
</feature>
<feature type="active site" description="Nucleophile" evidence="1">
    <location>
        <position position="437"/>
    </location>
</feature>
<feature type="active site" description="Proton donor" evidence="1">
    <location>
        <position position="488"/>
    </location>
</feature>
<accession>Q2JT08</accession>
<evidence type="ECO:0000255" key="1">
    <source>
        <dbReference type="HAMAP-Rule" id="MF_00685"/>
    </source>
</evidence>
<gene>
    <name evidence="1" type="primary">glgB</name>
    <name type="ordered locus">CYA_2062</name>
</gene>
<protein>
    <recommendedName>
        <fullName evidence="1">1,4-alpha-glucan branching enzyme GlgB</fullName>
        <ecNumber evidence="1">2.4.1.18</ecNumber>
    </recommendedName>
    <alternativeName>
        <fullName evidence="1">1,4-alpha-D-glucan:1,4-alpha-D-glucan 6-glucosyl-transferase</fullName>
    </alternativeName>
    <alternativeName>
        <fullName evidence="1">Alpha-(1-&gt;4)-glucan branching enzyme</fullName>
    </alternativeName>
    <alternativeName>
        <fullName evidence="1">Glycogen branching enzyme</fullName>
        <shortName evidence="1">BE</shortName>
    </alternativeName>
</protein>
<dbReference type="EC" id="2.4.1.18" evidence="1"/>
<dbReference type="EMBL" id="CP000239">
    <property type="protein sequence ID" value="ABD00202.1"/>
    <property type="molecule type" value="Genomic_DNA"/>
</dbReference>
<dbReference type="RefSeq" id="WP_011430876.1">
    <property type="nucleotide sequence ID" value="NC_007775.1"/>
</dbReference>
<dbReference type="SMR" id="Q2JT08"/>
<dbReference type="STRING" id="321327.CYA_2062"/>
<dbReference type="CAZy" id="CBM48">
    <property type="family name" value="Carbohydrate-Binding Module Family 48"/>
</dbReference>
<dbReference type="CAZy" id="GH13">
    <property type="family name" value="Glycoside Hydrolase Family 13"/>
</dbReference>
<dbReference type="KEGG" id="cya:CYA_2062"/>
<dbReference type="eggNOG" id="COG0296">
    <property type="taxonomic scope" value="Bacteria"/>
</dbReference>
<dbReference type="HOGENOM" id="CLU_004245_3_2_3"/>
<dbReference type="OrthoDB" id="9800174at2"/>
<dbReference type="UniPathway" id="UPA00164"/>
<dbReference type="Proteomes" id="UP000008818">
    <property type="component" value="Chromosome"/>
</dbReference>
<dbReference type="GO" id="GO:0005829">
    <property type="term" value="C:cytosol"/>
    <property type="evidence" value="ECO:0007669"/>
    <property type="project" value="TreeGrafter"/>
</dbReference>
<dbReference type="GO" id="GO:0003844">
    <property type="term" value="F:1,4-alpha-glucan branching enzyme activity"/>
    <property type="evidence" value="ECO:0007669"/>
    <property type="project" value="UniProtKB-UniRule"/>
</dbReference>
<dbReference type="GO" id="GO:0043169">
    <property type="term" value="F:cation binding"/>
    <property type="evidence" value="ECO:0007669"/>
    <property type="project" value="InterPro"/>
</dbReference>
<dbReference type="GO" id="GO:0004553">
    <property type="term" value="F:hydrolase activity, hydrolyzing O-glycosyl compounds"/>
    <property type="evidence" value="ECO:0007669"/>
    <property type="project" value="InterPro"/>
</dbReference>
<dbReference type="GO" id="GO:0005978">
    <property type="term" value="P:glycogen biosynthetic process"/>
    <property type="evidence" value="ECO:0007669"/>
    <property type="project" value="UniProtKB-UniRule"/>
</dbReference>
<dbReference type="CDD" id="cd11322">
    <property type="entry name" value="AmyAc_Glg_BE"/>
    <property type="match status" value="1"/>
</dbReference>
<dbReference type="CDD" id="cd02855">
    <property type="entry name" value="E_set_GBE_prok_N"/>
    <property type="match status" value="1"/>
</dbReference>
<dbReference type="FunFam" id="2.60.40.10:FF:000169">
    <property type="entry name" value="1,4-alpha-glucan branching enzyme GlgB"/>
    <property type="match status" value="1"/>
</dbReference>
<dbReference type="FunFam" id="2.60.40.1180:FF:000002">
    <property type="entry name" value="1,4-alpha-glucan branching enzyme GlgB"/>
    <property type="match status" value="1"/>
</dbReference>
<dbReference type="FunFam" id="3.20.20.80:FF:000003">
    <property type="entry name" value="1,4-alpha-glucan branching enzyme GlgB"/>
    <property type="match status" value="1"/>
</dbReference>
<dbReference type="Gene3D" id="3.20.20.80">
    <property type="entry name" value="Glycosidases"/>
    <property type="match status" value="1"/>
</dbReference>
<dbReference type="Gene3D" id="2.60.40.1180">
    <property type="entry name" value="Golgi alpha-mannosidase II"/>
    <property type="match status" value="1"/>
</dbReference>
<dbReference type="Gene3D" id="2.60.40.10">
    <property type="entry name" value="Immunoglobulins"/>
    <property type="match status" value="2"/>
</dbReference>
<dbReference type="HAMAP" id="MF_00685">
    <property type="entry name" value="GlgB"/>
    <property type="match status" value="1"/>
</dbReference>
<dbReference type="InterPro" id="IPR006048">
    <property type="entry name" value="A-amylase/branching_C"/>
</dbReference>
<dbReference type="InterPro" id="IPR037439">
    <property type="entry name" value="Branching_enzy"/>
</dbReference>
<dbReference type="InterPro" id="IPR006407">
    <property type="entry name" value="GlgB"/>
</dbReference>
<dbReference type="InterPro" id="IPR054169">
    <property type="entry name" value="GlgB_N"/>
</dbReference>
<dbReference type="InterPro" id="IPR044143">
    <property type="entry name" value="GlgB_N_E_set_prok"/>
</dbReference>
<dbReference type="InterPro" id="IPR006047">
    <property type="entry name" value="Glyco_hydro_13_cat_dom"/>
</dbReference>
<dbReference type="InterPro" id="IPR004193">
    <property type="entry name" value="Glyco_hydro_13_N"/>
</dbReference>
<dbReference type="InterPro" id="IPR013780">
    <property type="entry name" value="Glyco_hydro_b"/>
</dbReference>
<dbReference type="InterPro" id="IPR017853">
    <property type="entry name" value="Glycoside_hydrolase_SF"/>
</dbReference>
<dbReference type="InterPro" id="IPR013783">
    <property type="entry name" value="Ig-like_fold"/>
</dbReference>
<dbReference type="InterPro" id="IPR014756">
    <property type="entry name" value="Ig_E-set"/>
</dbReference>
<dbReference type="NCBIfam" id="TIGR01515">
    <property type="entry name" value="branching_enzym"/>
    <property type="match status" value="1"/>
</dbReference>
<dbReference type="NCBIfam" id="NF003811">
    <property type="entry name" value="PRK05402.1"/>
    <property type="match status" value="1"/>
</dbReference>
<dbReference type="NCBIfam" id="NF008967">
    <property type="entry name" value="PRK12313.1"/>
    <property type="match status" value="1"/>
</dbReference>
<dbReference type="PANTHER" id="PTHR43651">
    <property type="entry name" value="1,4-ALPHA-GLUCAN-BRANCHING ENZYME"/>
    <property type="match status" value="1"/>
</dbReference>
<dbReference type="PANTHER" id="PTHR43651:SF3">
    <property type="entry name" value="1,4-ALPHA-GLUCAN-BRANCHING ENZYME"/>
    <property type="match status" value="1"/>
</dbReference>
<dbReference type="Pfam" id="PF00128">
    <property type="entry name" value="Alpha-amylase"/>
    <property type="match status" value="2"/>
</dbReference>
<dbReference type="Pfam" id="PF02806">
    <property type="entry name" value="Alpha-amylase_C"/>
    <property type="match status" value="1"/>
</dbReference>
<dbReference type="Pfam" id="PF02922">
    <property type="entry name" value="CBM_48"/>
    <property type="match status" value="1"/>
</dbReference>
<dbReference type="Pfam" id="PF22019">
    <property type="entry name" value="GlgB_N"/>
    <property type="match status" value="1"/>
</dbReference>
<dbReference type="PIRSF" id="PIRSF000463">
    <property type="entry name" value="GlgB"/>
    <property type="match status" value="1"/>
</dbReference>
<dbReference type="SMART" id="SM00642">
    <property type="entry name" value="Aamy"/>
    <property type="match status" value="1"/>
</dbReference>
<dbReference type="SUPFAM" id="SSF51445">
    <property type="entry name" value="(Trans)glycosidases"/>
    <property type="match status" value="1"/>
</dbReference>
<dbReference type="SUPFAM" id="SSF81296">
    <property type="entry name" value="E set domains"/>
    <property type="match status" value="2"/>
</dbReference>
<dbReference type="SUPFAM" id="SSF51011">
    <property type="entry name" value="Glycosyl hydrolase domain"/>
    <property type="match status" value="1"/>
</dbReference>
<reference key="1">
    <citation type="journal article" date="2007" name="ISME J.">
        <title>Population level functional diversity in a microbial community revealed by comparative genomic and metagenomic analyses.</title>
        <authorList>
            <person name="Bhaya D."/>
            <person name="Grossman A.R."/>
            <person name="Steunou A.-S."/>
            <person name="Khuri N."/>
            <person name="Cohan F.M."/>
            <person name="Hamamura N."/>
            <person name="Melendrez M.C."/>
            <person name="Bateson M.M."/>
            <person name="Ward D.M."/>
            <person name="Heidelberg J.F."/>
        </authorList>
    </citation>
    <scope>NUCLEOTIDE SEQUENCE [LARGE SCALE GENOMIC DNA]</scope>
    <source>
        <strain>JA-3-3Ab</strain>
    </source>
</reference>
<name>GLGB_SYNJA</name>
<organism>
    <name type="scientific">Synechococcus sp. (strain JA-3-3Ab)</name>
    <name type="common">Cyanobacteria bacterium Yellowstone A-Prime</name>
    <dbReference type="NCBI Taxonomy" id="321327"/>
    <lineage>
        <taxon>Bacteria</taxon>
        <taxon>Bacillati</taxon>
        <taxon>Cyanobacteriota</taxon>
        <taxon>Cyanophyceae</taxon>
        <taxon>Synechococcales</taxon>
        <taxon>Synechococcaceae</taxon>
        <taxon>Synechococcus</taxon>
    </lineage>
</organism>
<sequence>MGFLLSAEQVLQFVTNQWQDPYAVLGPQQIEQGETSFWLVRALVPNAKQVWLVERATGQAYPMQPLHPETLFELCFAPGTPVPDYFLRAQRVWDPEGQHLEEWEDPYRFPLEKVNHIGELDRYLFNEGNHHRIYEKLGAHPISVDGVQGVHFAVWAPNARNVSVIGDFNHWDGRQHQMKRLGESGIWAVFIPGVGPGAVYKYEVKTAWGDIYEKSDPYGFQQEVRPKTGSIVADLHTYTWHDQEWLEKRAATDPLRSPISVYEVHLGSWMHASTEDPPADGHLVPVEQKPNTRFLTYRELADKLIPYVKELGFTHIELLPVAEHPFDGSWGYQVIGYYAVTSRYGSPQDFMYFVDRAHQEGIGVIVDWVPGHFPKDGHGLAFFDGTHLYEYADPRKGEHKGWGTLVFNYGRNEVRNYLIANALFWFDKYHIDGLRVDAVASMLYLDYDRKEWIPNCYGGREHLEAIDFFRQLNTLIFKYYPGVLSIAEESTAWPMVTWPTHVGGLGFNLKWNMGWMHDMLNYFRMDPWFRQFHHNLVTFSLMYAFSENYMLAFSHDEVVHGKSHMLGKMPGDLWHKFASLRALYGYMFTHPGKKTLFMSMEFGQWNEWNVWADLDWELLQYEPHAKLRHYVATLNQLLRSQPALYTQDTKPEGFRWIDCSDHRGIISFIRYGEDPREWLVVVCNFTPVVWPNYRIGVPQRGFYRELLNSDAVEFWGSGVGNLGGKWTDDWPYHNLPYSLELCLPPLSTLVLKWQPPQLAEDSGENKAMLE</sequence>
<proteinExistence type="inferred from homology"/>
<comment type="function">
    <text evidence="1">Catalyzes the formation of the alpha-1,6-glucosidic linkages in glycogen by scission of a 1,4-alpha-linked oligosaccharide from growing alpha-1,4-glucan chains and the subsequent attachment of the oligosaccharide to the alpha-1,6 position.</text>
</comment>
<comment type="catalytic activity">
    <reaction evidence="1">
        <text>Transfers a segment of a (1-&gt;4)-alpha-D-glucan chain to a primary hydroxy group in a similar glucan chain.</text>
        <dbReference type="EC" id="2.4.1.18"/>
    </reaction>
</comment>
<comment type="pathway">
    <text evidence="1">Glycan biosynthesis; glycogen biosynthesis.</text>
</comment>
<comment type="subunit">
    <text evidence="1">Monomer.</text>
</comment>
<comment type="similarity">
    <text evidence="1">Belongs to the glycosyl hydrolase 13 family. GlgB subfamily.</text>
</comment>